<gene>
    <name type="primary">Tm7sf3</name>
</gene>
<sequence>MWRLRLLVLAVLAAGSAEAQANSSDGFLEFSVGKFTYFVLSRRFPQEAVLRHISSNVTFLLFQIHSQYQNTTVSYTKTLLPSTSGTGNDRGLVFILRPEQTVCTWYLETEDTKPVQSVAVTLSYSERDPIPGGCNLEFDLDIDPNIYLDYNFFETTIKFAPANIGYARAAEPPPCDVSTGQESRWRLRYHVYQYFLPEGDLTEASLLQHLQRMAQVVQVMASAVKVVTLTADDKTVVSFSSLPGQGVIYNVIVWDPSLNTSAAYVPVHTYACSFDSVDGNCVPPGRVSTKVFSTLFALLGLFTCFFGHRFWKTELFFVGFIFLGFFFYILITRLTALKYEVRLVLTAVAGSIGGLLLVASWWRFGILTLCMLCVGLVLGFLVSSGTFFTPLGNLNVFHDDGVFWVTFSCIALLVPVIFLGCLRILNILACGIVGSYSVVLAINSYMFTSLSYITLNVLRRALNADFRGAFIRVPFQTNDYIILAVWGMLAVTGITLQIRRERGRPPFPPHPYKLWKQERERRVTNILDPSHHIPPLRERLYGWVARIKELFQKEQPAGERTPLLL</sequence>
<evidence type="ECO:0000250" key="1">
    <source>
        <dbReference type="UniProtKB" id="Q9CRG1"/>
    </source>
</evidence>
<evidence type="ECO:0000250" key="2">
    <source>
        <dbReference type="UniProtKB" id="Q9NS93"/>
    </source>
</evidence>
<evidence type="ECO:0000255" key="3"/>
<accession>Q5FVF4</accession>
<proteinExistence type="evidence at transcript level"/>
<protein>
    <recommendedName>
        <fullName>Transmembrane 7 superfamily member 3</fullName>
    </recommendedName>
</protein>
<reference key="1">
    <citation type="journal article" date="2004" name="Genome Res.">
        <title>The status, quality, and expansion of the NIH full-length cDNA project: the Mammalian Gene Collection (MGC).</title>
        <authorList>
            <consortium name="The MGC Project Team"/>
        </authorList>
    </citation>
    <scope>NUCLEOTIDE SEQUENCE [LARGE SCALE MRNA]</scope>
    <source>
        <tissue>Spleen</tissue>
    </source>
</reference>
<organism>
    <name type="scientific">Rattus norvegicus</name>
    <name type="common">Rat</name>
    <dbReference type="NCBI Taxonomy" id="10116"/>
    <lineage>
        <taxon>Eukaryota</taxon>
        <taxon>Metazoa</taxon>
        <taxon>Chordata</taxon>
        <taxon>Craniata</taxon>
        <taxon>Vertebrata</taxon>
        <taxon>Euteleostomi</taxon>
        <taxon>Mammalia</taxon>
        <taxon>Eutheria</taxon>
        <taxon>Euarchontoglires</taxon>
        <taxon>Glires</taxon>
        <taxon>Rodentia</taxon>
        <taxon>Myomorpha</taxon>
        <taxon>Muroidea</taxon>
        <taxon>Muridae</taxon>
        <taxon>Murinae</taxon>
        <taxon>Rattus</taxon>
    </lineage>
</organism>
<comment type="function">
    <text evidence="1 2">Involved in the inhibition of cytokine-induced death of pancreatic beta cells (By similarity). Involved in the promotion of insulin secretion from pancreatic beta cells (By similarity). Is a downstream transcriptional target of p53/TP53, and acts as a pro-survival homeostatic factor that attenuates the development of cellular stress. Maintains protein homeostasis and promotes cell survival through attenuation of endoplasmic reticulum (ER) stress and the subsequent induction of unfolded protein response (UPR) (By similarity).</text>
</comment>
<comment type="subcellular location">
    <subcellularLocation>
        <location evidence="2">Cell membrane</location>
        <topology evidence="3">Multi-pass membrane protein</topology>
    </subcellularLocation>
</comment>
<name>TM7S3_RAT</name>
<feature type="signal peptide" evidence="3">
    <location>
        <begin position="1"/>
        <end position="21"/>
    </location>
</feature>
<feature type="chain" id="PRO_0000045329" description="Transmembrane 7 superfamily member 3">
    <location>
        <begin position="22"/>
        <end position="565"/>
    </location>
</feature>
<feature type="transmembrane region" description="Helical" evidence="3">
    <location>
        <begin position="287"/>
        <end position="307"/>
    </location>
</feature>
<feature type="transmembrane region" description="Helical" evidence="3">
    <location>
        <begin position="311"/>
        <end position="331"/>
    </location>
</feature>
<feature type="transmembrane region" description="Helical" evidence="3">
    <location>
        <begin position="341"/>
        <end position="361"/>
    </location>
</feature>
<feature type="transmembrane region" description="Helical" evidence="3">
    <location>
        <begin position="364"/>
        <end position="384"/>
    </location>
</feature>
<feature type="transmembrane region" description="Helical" evidence="3">
    <location>
        <begin position="402"/>
        <end position="422"/>
    </location>
</feature>
<feature type="transmembrane region" description="Helical" evidence="3">
    <location>
        <begin position="427"/>
        <end position="447"/>
    </location>
</feature>
<feature type="transmembrane region" description="Helical" evidence="3">
    <location>
        <begin position="478"/>
        <end position="498"/>
    </location>
</feature>
<feature type="glycosylation site" description="N-linked (GlcNAc...) asparagine" evidence="3">
    <location>
        <position position="22"/>
    </location>
</feature>
<feature type="glycosylation site" description="N-linked (GlcNAc...) asparagine" evidence="3">
    <location>
        <position position="56"/>
    </location>
</feature>
<feature type="glycosylation site" description="N-linked (GlcNAc...) asparagine" evidence="3">
    <location>
        <position position="70"/>
    </location>
</feature>
<feature type="glycosylation site" description="N-linked (GlcNAc...) asparagine" evidence="3">
    <location>
        <position position="259"/>
    </location>
</feature>
<dbReference type="EMBL" id="BC090030">
    <property type="protein sequence ID" value="AAH90030.1"/>
    <property type="molecule type" value="mRNA"/>
</dbReference>
<dbReference type="RefSeq" id="NP_001011970.1">
    <property type="nucleotide sequence ID" value="NM_001011970.1"/>
</dbReference>
<dbReference type="SMR" id="Q5FVF4"/>
<dbReference type="FunCoup" id="Q5FVF4">
    <property type="interactions" value="319"/>
</dbReference>
<dbReference type="STRING" id="10116.ENSRNOP00000002486"/>
<dbReference type="GlyCosmos" id="Q5FVF4">
    <property type="glycosylation" value="4 sites, No reported glycans"/>
</dbReference>
<dbReference type="GlyGen" id="Q5FVF4">
    <property type="glycosylation" value="4 sites"/>
</dbReference>
<dbReference type="iPTMnet" id="Q5FVF4"/>
<dbReference type="PhosphoSitePlus" id="Q5FVF4"/>
<dbReference type="PaxDb" id="10116-ENSRNOP00000002486"/>
<dbReference type="Ensembl" id="ENSRNOT00000002486.6">
    <property type="protein sequence ID" value="ENSRNOP00000002486.5"/>
    <property type="gene ID" value="ENSRNOG00000001817.6"/>
</dbReference>
<dbReference type="GeneID" id="297725"/>
<dbReference type="KEGG" id="rno:297725"/>
<dbReference type="UCSC" id="RGD:1306752">
    <property type="organism name" value="rat"/>
</dbReference>
<dbReference type="AGR" id="RGD:1306752"/>
<dbReference type="CTD" id="51768"/>
<dbReference type="RGD" id="1306752">
    <property type="gene designation" value="Tm7sf3"/>
</dbReference>
<dbReference type="eggNOG" id="ENOG502QS07">
    <property type="taxonomic scope" value="Eukaryota"/>
</dbReference>
<dbReference type="GeneTree" id="ENSGT00390000008702"/>
<dbReference type="HOGENOM" id="CLU_029739_0_0_1"/>
<dbReference type="InParanoid" id="Q5FVF4"/>
<dbReference type="OMA" id="VCTWYLQ"/>
<dbReference type="OrthoDB" id="51556at9989"/>
<dbReference type="PhylomeDB" id="Q5FVF4"/>
<dbReference type="TreeFam" id="TF332291"/>
<dbReference type="PRO" id="PR:Q5FVF4"/>
<dbReference type="Proteomes" id="UP000002494">
    <property type="component" value="Chromosome 4"/>
</dbReference>
<dbReference type="Bgee" id="ENSRNOG00000001817">
    <property type="expression patterns" value="Expressed in colon and 20 other cell types or tissues"/>
</dbReference>
<dbReference type="GO" id="GO:0005886">
    <property type="term" value="C:plasma membrane"/>
    <property type="evidence" value="ECO:0000250"/>
    <property type="project" value="UniProtKB"/>
</dbReference>
<dbReference type="GO" id="GO:0034620">
    <property type="term" value="P:cellular response to unfolded protein"/>
    <property type="evidence" value="ECO:0000250"/>
    <property type="project" value="UniProtKB"/>
</dbReference>
<dbReference type="GO" id="GO:0043069">
    <property type="term" value="P:negative regulation of programmed cell death"/>
    <property type="evidence" value="ECO:0000250"/>
    <property type="project" value="UniProtKB"/>
</dbReference>
<dbReference type="GO" id="GO:0032024">
    <property type="term" value="P:positive regulation of insulin secretion"/>
    <property type="evidence" value="ECO:0000250"/>
    <property type="project" value="UniProtKB"/>
</dbReference>
<dbReference type="InterPro" id="IPR025256">
    <property type="entry name" value="TM7S3/TM198-like_dom"/>
</dbReference>
<dbReference type="InterPro" id="IPR042502">
    <property type="entry name" value="TM7SF3"/>
</dbReference>
<dbReference type="PANTHER" id="PTHR15937">
    <property type="entry name" value="TRANSMEMBRANE 7 SUPERFAMILY MEMBER 3"/>
    <property type="match status" value="1"/>
</dbReference>
<dbReference type="PANTHER" id="PTHR15937:SF3">
    <property type="entry name" value="TRANSMEMBRANE 7 SUPERFAMILY MEMBER 3"/>
    <property type="match status" value="1"/>
</dbReference>
<dbReference type="Pfam" id="PF13886">
    <property type="entry name" value="TM7S3_TM198"/>
    <property type="match status" value="1"/>
</dbReference>
<keyword id="KW-1003">Cell membrane</keyword>
<keyword id="KW-0325">Glycoprotein</keyword>
<keyword id="KW-0472">Membrane</keyword>
<keyword id="KW-1185">Reference proteome</keyword>
<keyword id="KW-0732">Signal</keyword>
<keyword id="KW-0346">Stress response</keyword>
<keyword id="KW-0812">Transmembrane</keyword>
<keyword id="KW-1133">Transmembrane helix</keyword>